<proteinExistence type="inferred from homology"/>
<name>RNPH_STUS1</name>
<gene>
    <name evidence="1" type="primary">rph</name>
    <name type="ordered locus">PST_0463</name>
</gene>
<evidence type="ECO:0000255" key="1">
    <source>
        <dbReference type="HAMAP-Rule" id="MF_00564"/>
    </source>
</evidence>
<sequence length="240" mass="25714">MKRPSGRAADQLRSIRITRNYTKHAEGSVLVEFGDTKVICTASIETGVPRFLKGQGQGWLTAEYGMLPRATGERNQREAARGKQGGRTLEIQRLIGRSLRAALDMSKLGENTLYIDCDVIQADGGTRTASITGAMVAVIDALKVLKKRGGLKGGDPVKQMIAAVSVGIYQGEPVLDLDYLEDSAAETDLNVVMTDAGGFIEVQGTAEGAPFHADELNAMLALAHDGVRQLFELQRAALAD</sequence>
<protein>
    <recommendedName>
        <fullName evidence="1">Ribonuclease PH</fullName>
        <shortName evidence="1">RNase PH</shortName>
        <ecNumber evidence="1">2.7.7.56</ecNumber>
    </recommendedName>
    <alternativeName>
        <fullName evidence="1">tRNA nucleotidyltransferase</fullName>
    </alternativeName>
</protein>
<feature type="chain" id="PRO_1000024855" description="Ribonuclease PH">
    <location>
        <begin position="1"/>
        <end position="240"/>
    </location>
</feature>
<feature type="binding site" evidence="1">
    <location>
        <position position="87"/>
    </location>
    <ligand>
        <name>phosphate</name>
        <dbReference type="ChEBI" id="CHEBI:43474"/>
        <note>substrate</note>
    </ligand>
</feature>
<feature type="binding site" evidence="1">
    <location>
        <begin position="125"/>
        <end position="127"/>
    </location>
    <ligand>
        <name>phosphate</name>
        <dbReference type="ChEBI" id="CHEBI:43474"/>
        <note>substrate</note>
    </ligand>
</feature>
<keyword id="KW-0548">Nucleotidyltransferase</keyword>
<keyword id="KW-1185">Reference proteome</keyword>
<keyword id="KW-0694">RNA-binding</keyword>
<keyword id="KW-0698">rRNA processing</keyword>
<keyword id="KW-0808">Transferase</keyword>
<keyword id="KW-0819">tRNA processing</keyword>
<keyword id="KW-0820">tRNA-binding</keyword>
<accession>A4VGR8</accession>
<comment type="function">
    <text evidence="1">Phosphorolytic 3'-5' exoribonuclease that plays an important role in tRNA 3'-end maturation. Removes nucleotide residues following the 3'-CCA terminus of tRNAs; can also add nucleotides to the ends of RNA molecules by using nucleoside diphosphates as substrates, but this may not be physiologically important. Probably plays a role in initiation of 16S rRNA degradation (leading to ribosome degradation) during starvation.</text>
</comment>
<comment type="catalytic activity">
    <reaction evidence="1">
        <text>tRNA(n+1) + phosphate = tRNA(n) + a ribonucleoside 5'-diphosphate</text>
        <dbReference type="Rhea" id="RHEA:10628"/>
        <dbReference type="Rhea" id="RHEA-COMP:17343"/>
        <dbReference type="Rhea" id="RHEA-COMP:17344"/>
        <dbReference type="ChEBI" id="CHEBI:43474"/>
        <dbReference type="ChEBI" id="CHEBI:57930"/>
        <dbReference type="ChEBI" id="CHEBI:173114"/>
        <dbReference type="EC" id="2.7.7.56"/>
    </reaction>
</comment>
<comment type="subunit">
    <text evidence="1">Homohexameric ring arranged as a trimer of dimers.</text>
</comment>
<comment type="similarity">
    <text evidence="1">Belongs to the RNase PH family.</text>
</comment>
<reference key="1">
    <citation type="journal article" date="2008" name="Proc. Natl. Acad. Sci. U.S.A.">
        <title>Nitrogen fixation island and rhizosphere competence traits in the genome of root-associated Pseudomonas stutzeri A1501.</title>
        <authorList>
            <person name="Yan Y."/>
            <person name="Yang J."/>
            <person name="Dou Y."/>
            <person name="Chen M."/>
            <person name="Ping S."/>
            <person name="Peng J."/>
            <person name="Lu W."/>
            <person name="Zhang W."/>
            <person name="Yao Z."/>
            <person name="Li H."/>
            <person name="Liu W."/>
            <person name="He S."/>
            <person name="Geng L."/>
            <person name="Zhang X."/>
            <person name="Yang F."/>
            <person name="Yu H."/>
            <person name="Zhan Y."/>
            <person name="Li D."/>
            <person name="Lin Z."/>
            <person name="Wang Y."/>
            <person name="Elmerich C."/>
            <person name="Lin M."/>
            <person name="Jin Q."/>
        </authorList>
    </citation>
    <scope>NUCLEOTIDE SEQUENCE [LARGE SCALE GENOMIC DNA]</scope>
    <source>
        <strain>A1501</strain>
    </source>
</reference>
<dbReference type="EC" id="2.7.7.56" evidence="1"/>
<dbReference type="EMBL" id="CP000304">
    <property type="protein sequence ID" value="ABP78169.1"/>
    <property type="molecule type" value="Genomic_DNA"/>
</dbReference>
<dbReference type="RefSeq" id="WP_011911698.1">
    <property type="nucleotide sequence ID" value="NC_009434.1"/>
</dbReference>
<dbReference type="SMR" id="A4VGR8"/>
<dbReference type="GeneID" id="66819722"/>
<dbReference type="KEGG" id="psa:PST_0463"/>
<dbReference type="eggNOG" id="COG0689">
    <property type="taxonomic scope" value="Bacteria"/>
</dbReference>
<dbReference type="HOGENOM" id="CLU_050858_0_0_6"/>
<dbReference type="Proteomes" id="UP000000233">
    <property type="component" value="Chromosome"/>
</dbReference>
<dbReference type="GO" id="GO:0000175">
    <property type="term" value="F:3'-5'-RNA exonuclease activity"/>
    <property type="evidence" value="ECO:0007669"/>
    <property type="project" value="UniProtKB-UniRule"/>
</dbReference>
<dbReference type="GO" id="GO:0000049">
    <property type="term" value="F:tRNA binding"/>
    <property type="evidence" value="ECO:0007669"/>
    <property type="project" value="UniProtKB-UniRule"/>
</dbReference>
<dbReference type="GO" id="GO:0009022">
    <property type="term" value="F:tRNA nucleotidyltransferase activity"/>
    <property type="evidence" value="ECO:0007669"/>
    <property type="project" value="UniProtKB-UniRule"/>
</dbReference>
<dbReference type="GO" id="GO:0016075">
    <property type="term" value="P:rRNA catabolic process"/>
    <property type="evidence" value="ECO:0007669"/>
    <property type="project" value="UniProtKB-UniRule"/>
</dbReference>
<dbReference type="GO" id="GO:0006364">
    <property type="term" value="P:rRNA processing"/>
    <property type="evidence" value="ECO:0007669"/>
    <property type="project" value="UniProtKB-KW"/>
</dbReference>
<dbReference type="GO" id="GO:0008033">
    <property type="term" value="P:tRNA processing"/>
    <property type="evidence" value="ECO:0007669"/>
    <property type="project" value="UniProtKB-UniRule"/>
</dbReference>
<dbReference type="CDD" id="cd11362">
    <property type="entry name" value="RNase_PH_bact"/>
    <property type="match status" value="1"/>
</dbReference>
<dbReference type="FunFam" id="3.30.230.70:FF:000003">
    <property type="entry name" value="Ribonuclease PH"/>
    <property type="match status" value="1"/>
</dbReference>
<dbReference type="Gene3D" id="3.30.230.70">
    <property type="entry name" value="GHMP Kinase, N-terminal domain"/>
    <property type="match status" value="1"/>
</dbReference>
<dbReference type="HAMAP" id="MF_00564">
    <property type="entry name" value="RNase_PH"/>
    <property type="match status" value="1"/>
</dbReference>
<dbReference type="InterPro" id="IPR001247">
    <property type="entry name" value="ExoRNase_PH_dom1"/>
</dbReference>
<dbReference type="InterPro" id="IPR015847">
    <property type="entry name" value="ExoRNase_PH_dom2"/>
</dbReference>
<dbReference type="InterPro" id="IPR036345">
    <property type="entry name" value="ExoRNase_PH_dom2_sf"/>
</dbReference>
<dbReference type="InterPro" id="IPR027408">
    <property type="entry name" value="PNPase/RNase_PH_dom_sf"/>
</dbReference>
<dbReference type="InterPro" id="IPR020568">
    <property type="entry name" value="Ribosomal_Su5_D2-typ_SF"/>
</dbReference>
<dbReference type="InterPro" id="IPR050080">
    <property type="entry name" value="RNase_PH"/>
</dbReference>
<dbReference type="InterPro" id="IPR002381">
    <property type="entry name" value="RNase_PH_bac-type"/>
</dbReference>
<dbReference type="InterPro" id="IPR018336">
    <property type="entry name" value="RNase_PH_CS"/>
</dbReference>
<dbReference type="NCBIfam" id="TIGR01966">
    <property type="entry name" value="RNasePH"/>
    <property type="match status" value="1"/>
</dbReference>
<dbReference type="PANTHER" id="PTHR11953">
    <property type="entry name" value="EXOSOME COMPLEX COMPONENT"/>
    <property type="match status" value="1"/>
</dbReference>
<dbReference type="PANTHER" id="PTHR11953:SF0">
    <property type="entry name" value="EXOSOME COMPLEX COMPONENT RRP41"/>
    <property type="match status" value="1"/>
</dbReference>
<dbReference type="Pfam" id="PF01138">
    <property type="entry name" value="RNase_PH"/>
    <property type="match status" value="1"/>
</dbReference>
<dbReference type="Pfam" id="PF03725">
    <property type="entry name" value="RNase_PH_C"/>
    <property type="match status" value="1"/>
</dbReference>
<dbReference type="SUPFAM" id="SSF55666">
    <property type="entry name" value="Ribonuclease PH domain 2-like"/>
    <property type="match status" value="1"/>
</dbReference>
<dbReference type="SUPFAM" id="SSF54211">
    <property type="entry name" value="Ribosomal protein S5 domain 2-like"/>
    <property type="match status" value="1"/>
</dbReference>
<dbReference type="PROSITE" id="PS01277">
    <property type="entry name" value="RIBONUCLEASE_PH"/>
    <property type="match status" value="1"/>
</dbReference>
<organism>
    <name type="scientific">Stutzerimonas stutzeri (strain A1501)</name>
    <name type="common">Pseudomonas stutzeri</name>
    <dbReference type="NCBI Taxonomy" id="379731"/>
    <lineage>
        <taxon>Bacteria</taxon>
        <taxon>Pseudomonadati</taxon>
        <taxon>Pseudomonadota</taxon>
        <taxon>Gammaproteobacteria</taxon>
        <taxon>Pseudomonadales</taxon>
        <taxon>Pseudomonadaceae</taxon>
        <taxon>Stutzerimonas</taxon>
    </lineage>
</organism>